<proteinExistence type="inferred from homology"/>
<dbReference type="EMBL" id="CP000284">
    <property type="protein sequence ID" value="ABE49393.1"/>
    <property type="molecule type" value="Genomic_DNA"/>
</dbReference>
<dbReference type="RefSeq" id="WP_011479347.1">
    <property type="nucleotide sequence ID" value="NC_007947.1"/>
</dbReference>
<dbReference type="SMR" id="Q1H294"/>
<dbReference type="STRING" id="265072.Mfla_1125"/>
<dbReference type="KEGG" id="mfa:Mfla_1125"/>
<dbReference type="eggNOG" id="COG2834">
    <property type="taxonomic scope" value="Bacteria"/>
</dbReference>
<dbReference type="HOGENOM" id="CLU_087560_0_0_4"/>
<dbReference type="OrthoDB" id="9787361at2"/>
<dbReference type="Proteomes" id="UP000002440">
    <property type="component" value="Chromosome"/>
</dbReference>
<dbReference type="GO" id="GO:0042597">
    <property type="term" value="C:periplasmic space"/>
    <property type="evidence" value="ECO:0007669"/>
    <property type="project" value="UniProtKB-SubCell"/>
</dbReference>
<dbReference type="GO" id="GO:0044874">
    <property type="term" value="P:lipoprotein localization to outer membrane"/>
    <property type="evidence" value="ECO:0007669"/>
    <property type="project" value="UniProtKB-UniRule"/>
</dbReference>
<dbReference type="GO" id="GO:0042953">
    <property type="term" value="P:lipoprotein transport"/>
    <property type="evidence" value="ECO:0007669"/>
    <property type="project" value="InterPro"/>
</dbReference>
<dbReference type="CDD" id="cd16325">
    <property type="entry name" value="LolA"/>
    <property type="match status" value="1"/>
</dbReference>
<dbReference type="Gene3D" id="2.50.20.10">
    <property type="entry name" value="Lipoprotein localisation LolA/LolB/LppX"/>
    <property type="match status" value="1"/>
</dbReference>
<dbReference type="HAMAP" id="MF_00240">
    <property type="entry name" value="LolA"/>
    <property type="match status" value="1"/>
</dbReference>
<dbReference type="InterPro" id="IPR029046">
    <property type="entry name" value="LolA/LolB/LppX"/>
</dbReference>
<dbReference type="InterPro" id="IPR004564">
    <property type="entry name" value="OM_lipoprot_carrier_LolA-like"/>
</dbReference>
<dbReference type="InterPro" id="IPR018323">
    <property type="entry name" value="OM_lipoprot_carrier_LolA_Pbac"/>
</dbReference>
<dbReference type="NCBIfam" id="TIGR00547">
    <property type="entry name" value="lolA"/>
    <property type="match status" value="1"/>
</dbReference>
<dbReference type="PANTHER" id="PTHR35869">
    <property type="entry name" value="OUTER-MEMBRANE LIPOPROTEIN CARRIER PROTEIN"/>
    <property type="match status" value="1"/>
</dbReference>
<dbReference type="PANTHER" id="PTHR35869:SF1">
    <property type="entry name" value="OUTER-MEMBRANE LIPOPROTEIN CARRIER PROTEIN"/>
    <property type="match status" value="1"/>
</dbReference>
<dbReference type="Pfam" id="PF03548">
    <property type="entry name" value="LolA"/>
    <property type="match status" value="1"/>
</dbReference>
<dbReference type="SUPFAM" id="SSF89392">
    <property type="entry name" value="Prokaryotic lipoproteins and lipoprotein localization factors"/>
    <property type="match status" value="1"/>
</dbReference>
<feature type="signal peptide" evidence="1">
    <location>
        <begin position="1"/>
        <end position="21"/>
    </location>
</feature>
<feature type="chain" id="PRO_1000005697" description="Outer-membrane lipoprotein carrier protein">
    <location>
        <begin position="22"/>
        <end position="205"/>
    </location>
</feature>
<accession>Q1H294</accession>
<evidence type="ECO:0000255" key="1">
    <source>
        <dbReference type="HAMAP-Rule" id="MF_00240"/>
    </source>
</evidence>
<protein>
    <recommendedName>
        <fullName evidence="1">Outer-membrane lipoprotein carrier protein</fullName>
    </recommendedName>
</protein>
<reference key="1">
    <citation type="submission" date="2006-03" db="EMBL/GenBank/DDBJ databases">
        <title>Complete sequence of Methylobacillus flagellatus KT.</title>
        <authorList>
            <consortium name="US DOE Joint Genome Institute"/>
            <person name="Copeland A."/>
            <person name="Lucas S."/>
            <person name="Lapidus A."/>
            <person name="Barry K."/>
            <person name="Detter J.C."/>
            <person name="Glavina del Rio T."/>
            <person name="Hammon N."/>
            <person name="Israni S."/>
            <person name="Dalin E."/>
            <person name="Tice H."/>
            <person name="Pitluck S."/>
            <person name="Brettin T."/>
            <person name="Bruce D."/>
            <person name="Han C."/>
            <person name="Tapia R."/>
            <person name="Saunders E."/>
            <person name="Gilna P."/>
            <person name="Schmutz J."/>
            <person name="Larimer F."/>
            <person name="Land M."/>
            <person name="Kyrpides N."/>
            <person name="Anderson I."/>
            <person name="Richardson P."/>
        </authorList>
    </citation>
    <scope>NUCLEOTIDE SEQUENCE [LARGE SCALE GENOMIC DNA]</scope>
    <source>
        <strain>ATCC 51484 / DSM 6875 / VKM B-1610 / KT</strain>
    </source>
</reference>
<keyword id="KW-0143">Chaperone</keyword>
<keyword id="KW-0574">Periplasm</keyword>
<keyword id="KW-0653">Protein transport</keyword>
<keyword id="KW-1185">Reference proteome</keyword>
<keyword id="KW-0732">Signal</keyword>
<keyword id="KW-0813">Transport</keyword>
<sequence>MRFLAVATMVVALMVPWSVRADGVESLKAFFKSTSAMRAHFRQVVTDAQGNKVQEVEGHMQLQRPGKFRWDYNKPYVQQIVGDGEKVWLYDPDLNQLTVRPMSKAIGSSPASLLAGAQDAERNFTLTTVIRSDGLAWAQAVPKAEDSGFDKVLLGFKGDELQKMELHDSFGHVTSIQFSQLQRNPAIANSSFQFVVPAGADVVGE</sequence>
<organism>
    <name type="scientific">Methylobacillus flagellatus (strain ATCC 51484 / DSM 6875 / VKM B-1610 / KT)</name>
    <dbReference type="NCBI Taxonomy" id="265072"/>
    <lineage>
        <taxon>Bacteria</taxon>
        <taxon>Pseudomonadati</taxon>
        <taxon>Pseudomonadota</taxon>
        <taxon>Betaproteobacteria</taxon>
        <taxon>Nitrosomonadales</taxon>
        <taxon>Methylophilaceae</taxon>
        <taxon>Methylobacillus</taxon>
    </lineage>
</organism>
<comment type="function">
    <text evidence="1">Participates in the translocation of lipoproteins from the inner membrane to the outer membrane. Only forms a complex with a lipoprotein if the residue after the N-terminal Cys is not an aspartate (The Asp acts as a targeting signal to indicate that the lipoprotein should stay in the inner membrane).</text>
</comment>
<comment type="subunit">
    <text evidence="1">Monomer.</text>
</comment>
<comment type="subcellular location">
    <subcellularLocation>
        <location evidence="1">Periplasm</location>
    </subcellularLocation>
</comment>
<comment type="similarity">
    <text evidence="1">Belongs to the LolA family.</text>
</comment>
<gene>
    <name evidence="1" type="primary">lolA</name>
    <name type="ordered locus">Mfla_1125</name>
</gene>
<name>LOLA_METFK</name>